<feature type="chain" id="PRO_1000043061" description="Anthranilate phosphoribosyltransferase">
    <location>
        <begin position="1"/>
        <end position="339"/>
    </location>
</feature>
<feature type="binding site" evidence="1">
    <location>
        <position position="82"/>
    </location>
    <ligand>
        <name>5-phospho-alpha-D-ribose 1-diphosphate</name>
        <dbReference type="ChEBI" id="CHEBI:58017"/>
    </ligand>
</feature>
<feature type="binding site" evidence="1">
    <location>
        <position position="82"/>
    </location>
    <ligand>
        <name>anthranilate</name>
        <dbReference type="ChEBI" id="CHEBI:16567"/>
        <label>1</label>
    </ligand>
</feature>
<feature type="binding site" evidence="1">
    <location>
        <begin position="85"/>
        <end position="86"/>
    </location>
    <ligand>
        <name>5-phospho-alpha-D-ribose 1-diphosphate</name>
        <dbReference type="ChEBI" id="CHEBI:58017"/>
    </ligand>
</feature>
<feature type="binding site" evidence="1">
    <location>
        <begin position="92"/>
        <end position="95"/>
    </location>
    <ligand>
        <name>5-phospho-alpha-D-ribose 1-diphosphate</name>
        <dbReference type="ChEBI" id="CHEBI:58017"/>
    </ligand>
</feature>
<feature type="binding site" evidence="1">
    <location>
        <position position="94"/>
    </location>
    <ligand>
        <name>Mg(2+)</name>
        <dbReference type="ChEBI" id="CHEBI:18420"/>
        <label>1</label>
    </ligand>
</feature>
<feature type="binding site" evidence="1">
    <location>
        <begin position="110"/>
        <end position="118"/>
    </location>
    <ligand>
        <name>5-phospho-alpha-D-ribose 1-diphosphate</name>
        <dbReference type="ChEBI" id="CHEBI:58017"/>
    </ligand>
</feature>
<feature type="binding site" evidence="1">
    <location>
        <position position="113"/>
    </location>
    <ligand>
        <name>anthranilate</name>
        <dbReference type="ChEBI" id="CHEBI:16567"/>
        <label>1</label>
    </ligand>
</feature>
<feature type="binding site" evidence="1">
    <location>
        <position position="122"/>
    </location>
    <ligand>
        <name>5-phospho-alpha-D-ribose 1-diphosphate</name>
        <dbReference type="ChEBI" id="CHEBI:58017"/>
    </ligand>
</feature>
<feature type="binding site" evidence="1">
    <location>
        <position position="168"/>
    </location>
    <ligand>
        <name>anthranilate</name>
        <dbReference type="ChEBI" id="CHEBI:16567"/>
        <label>2</label>
    </ligand>
</feature>
<feature type="binding site" evidence="1">
    <location>
        <position position="227"/>
    </location>
    <ligand>
        <name>Mg(2+)</name>
        <dbReference type="ChEBI" id="CHEBI:18420"/>
        <label>2</label>
    </ligand>
</feature>
<feature type="binding site" evidence="1">
    <location>
        <position position="228"/>
    </location>
    <ligand>
        <name>Mg(2+)</name>
        <dbReference type="ChEBI" id="CHEBI:18420"/>
        <label>1</label>
    </ligand>
</feature>
<feature type="binding site" evidence="1">
    <location>
        <position position="228"/>
    </location>
    <ligand>
        <name>Mg(2+)</name>
        <dbReference type="ChEBI" id="CHEBI:18420"/>
        <label>2</label>
    </ligand>
</feature>
<accession>A1AVF1</accession>
<evidence type="ECO:0000255" key="1">
    <source>
        <dbReference type="HAMAP-Rule" id="MF_00211"/>
    </source>
</evidence>
<proteinExistence type="inferred from homology"/>
<dbReference type="EC" id="2.4.2.18" evidence="1"/>
<dbReference type="EMBL" id="CP000488">
    <property type="protein sequence ID" value="ABL01908.1"/>
    <property type="molecule type" value="Genomic_DNA"/>
</dbReference>
<dbReference type="RefSeq" id="WP_011737534.1">
    <property type="nucleotide sequence ID" value="NC_008610.1"/>
</dbReference>
<dbReference type="SMR" id="A1AVF1"/>
<dbReference type="STRING" id="413404.Rmag_0112"/>
<dbReference type="KEGG" id="rma:Rmag_0112"/>
<dbReference type="eggNOG" id="COG0547">
    <property type="taxonomic scope" value="Bacteria"/>
</dbReference>
<dbReference type="HOGENOM" id="CLU_034315_2_1_6"/>
<dbReference type="OrthoDB" id="9806430at2"/>
<dbReference type="UniPathway" id="UPA00035">
    <property type="reaction ID" value="UER00041"/>
</dbReference>
<dbReference type="Proteomes" id="UP000002587">
    <property type="component" value="Chromosome"/>
</dbReference>
<dbReference type="GO" id="GO:0005829">
    <property type="term" value="C:cytosol"/>
    <property type="evidence" value="ECO:0007669"/>
    <property type="project" value="TreeGrafter"/>
</dbReference>
<dbReference type="GO" id="GO:0004048">
    <property type="term" value="F:anthranilate phosphoribosyltransferase activity"/>
    <property type="evidence" value="ECO:0007669"/>
    <property type="project" value="UniProtKB-UniRule"/>
</dbReference>
<dbReference type="GO" id="GO:0000287">
    <property type="term" value="F:magnesium ion binding"/>
    <property type="evidence" value="ECO:0007669"/>
    <property type="project" value="UniProtKB-UniRule"/>
</dbReference>
<dbReference type="GO" id="GO:0000162">
    <property type="term" value="P:L-tryptophan biosynthetic process"/>
    <property type="evidence" value="ECO:0007669"/>
    <property type="project" value="UniProtKB-UniRule"/>
</dbReference>
<dbReference type="FunFam" id="1.20.970.10:FF:000006">
    <property type="entry name" value="Anthranilate phosphoribosyltransferase"/>
    <property type="match status" value="1"/>
</dbReference>
<dbReference type="FunFam" id="3.40.1030.10:FF:000002">
    <property type="entry name" value="Anthranilate phosphoribosyltransferase"/>
    <property type="match status" value="1"/>
</dbReference>
<dbReference type="Gene3D" id="3.40.1030.10">
    <property type="entry name" value="Nucleoside phosphorylase/phosphoribosyltransferase catalytic domain"/>
    <property type="match status" value="1"/>
</dbReference>
<dbReference type="Gene3D" id="1.20.970.10">
    <property type="entry name" value="Transferase, Pyrimidine Nucleoside Phosphorylase, Chain C"/>
    <property type="match status" value="1"/>
</dbReference>
<dbReference type="HAMAP" id="MF_00211">
    <property type="entry name" value="TrpD"/>
    <property type="match status" value="1"/>
</dbReference>
<dbReference type="InterPro" id="IPR005940">
    <property type="entry name" value="Anthranilate_Pribosyl_Tfrase"/>
</dbReference>
<dbReference type="InterPro" id="IPR000312">
    <property type="entry name" value="Glycosyl_Trfase_fam3"/>
</dbReference>
<dbReference type="InterPro" id="IPR017459">
    <property type="entry name" value="Glycosyl_Trfase_fam3_N_dom"/>
</dbReference>
<dbReference type="InterPro" id="IPR036320">
    <property type="entry name" value="Glycosyl_Trfase_fam3_N_dom_sf"/>
</dbReference>
<dbReference type="InterPro" id="IPR035902">
    <property type="entry name" value="Nuc_phospho_transferase"/>
</dbReference>
<dbReference type="NCBIfam" id="TIGR01245">
    <property type="entry name" value="trpD"/>
    <property type="match status" value="1"/>
</dbReference>
<dbReference type="PANTHER" id="PTHR43285">
    <property type="entry name" value="ANTHRANILATE PHOSPHORIBOSYLTRANSFERASE"/>
    <property type="match status" value="1"/>
</dbReference>
<dbReference type="PANTHER" id="PTHR43285:SF2">
    <property type="entry name" value="ANTHRANILATE PHOSPHORIBOSYLTRANSFERASE"/>
    <property type="match status" value="1"/>
</dbReference>
<dbReference type="Pfam" id="PF02885">
    <property type="entry name" value="Glycos_trans_3N"/>
    <property type="match status" value="1"/>
</dbReference>
<dbReference type="Pfam" id="PF00591">
    <property type="entry name" value="Glycos_transf_3"/>
    <property type="match status" value="1"/>
</dbReference>
<dbReference type="SUPFAM" id="SSF52418">
    <property type="entry name" value="Nucleoside phosphorylase/phosphoribosyltransferase catalytic domain"/>
    <property type="match status" value="1"/>
</dbReference>
<dbReference type="SUPFAM" id="SSF47648">
    <property type="entry name" value="Nucleoside phosphorylase/phosphoribosyltransferase N-terminal domain"/>
    <property type="match status" value="1"/>
</dbReference>
<protein>
    <recommendedName>
        <fullName evidence="1">Anthranilate phosphoribosyltransferase</fullName>
        <ecNumber evidence="1">2.4.2.18</ecNumber>
    </recommendedName>
</protein>
<name>TRPD_RUTMC</name>
<comment type="function">
    <text evidence="1">Catalyzes the transfer of the phosphoribosyl group of 5-phosphorylribose-1-pyrophosphate (PRPP) to anthranilate to yield N-(5'-phosphoribosyl)-anthranilate (PRA).</text>
</comment>
<comment type="catalytic activity">
    <reaction evidence="1">
        <text>N-(5-phospho-beta-D-ribosyl)anthranilate + diphosphate = 5-phospho-alpha-D-ribose 1-diphosphate + anthranilate</text>
        <dbReference type="Rhea" id="RHEA:11768"/>
        <dbReference type="ChEBI" id="CHEBI:16567"/>
        <dbReference type="ChEBI" id="CHEBI:18277"/>
        <dbReference type="ChEBI" id="CHEBI:33019"/>
        <dbReference type="ChEBI" id="CHEBI:58017"/>
        <dbReference type="EC" id="2.4.2.18"/>
    </reaction>
</comment>
<comment type="cofactor">
    <cofactor evidence="1">
        <name>Mg(2+)</name>
        <dbReference type="ChEBI" id="CHEBI:18420"/>
    </cofactor>
    <text evidence="1">Binds 2 magnesium ions per monomer.</text>
</comment>
<comment type="pathway">
    <text evidence="1">Amino-acid biosynthesis; L-tryptophan biosynthesis; L-tryptophan from chorismate: step 2/5.</text>
</comment>
<comment type="subunit">
    <text evidence="1">Homodimer.</text>
</comment>
<comment type="similarity">
    <text evidence="1">Belongs to the anthranilate phosphoribosyltransferase family.</text>
</comment>
<organism>
    <name type="scientific">Ruthia magnifica subsp. Calyptogena magnifica</name>
    <dbReference type="NCBI Taxonomy" id="413404"/>
    <lineage>
        <taxon>Bacteria</taxon>
        <taxon>Pseudomonadati</taxon>
        <taxon>Pseudomonadota</taxon>
        <taxon>Gammaproteobacteria</taxon>
        <taxon>Candidatus Pseudothioglobaceae</taxon>
        <taxon>Candidatus Ruthturnera</taxon>
    </lineage>
</organism>
<keyword id="KW-0028">Amino-acid biosynthesis</keyword>
<keyword id="KW-0057">Aromatic amino acid biosynthesis</keyword>
<keyword id="KW-0328">Glycosyltransferase</keyword>
<keyword id="KW-0460">Magnesium</keyword>
<keyword id="KW-0479">Metal-binding</keyword>
<keyword id="KW-0808">Transferase</keyword>
<keyword id="KW-0822">Tryptophan biosynthesis</keyword>
<reference key="1">
    <citation type="journal article" date="2007" name="Science">
        <title>The Calyptogena magnifica chemoautotrophic symbiont genome.</title>
        <authorList>
            <person name="Newton I.L.G."/>
            <person name="Woyke T."/>
            <person name="Auchtung T.A."/>
            <person name="Dilly G.F."/>
            <person name="Dutton R.J."/>
            <person name="Fisher M.C."/>
            <person name="Fontanez K.M."/>
            <person name="Lau E."/>
            <person name="Stewart F.J."/>
            <person name="Richardson P.M."/>
            <person name="Barry K.W."/>
            <person name="Saunders E."/>
            <person name="Detter J.C."/>
            <person name="Wu D."/>
            <person name="Eisen J.A."/>
            <person name="Cavanaugh C.M."/>
        </authorList>
    </citation>
    <scope>NUCLEOTIDE SEQUENCE [LARGE SCALE GENOMIC DNA]</scope>
</reference>
<sequence length="339" mass="35930">MNIQQAIKQIIKKQDLSENEMHKVMNDIMTGKTTDAQIGGFLVGLAIKGESVDEITAAAKTMRSLVKSVTIKNTKHLVDTCGTGGDGLGLFNISTACTFVVAAAGGSVAKHGNSSISSKSGSADVLKAAGVNLDMSVEKISKCIEKIGIGFMFAPFHHIAMKHVIEPRKDLAIKTIFNVLGPLTNPAKVPNQVMGVYAQSLVEPIAYVLKNLGSKHVIVVHSKDGLDEISIADDTFVAELKNGQVSTYTINPADFSLPLGNLNDIKANNADYSLVLIQQALDGKDGVAKNIIALNSGAAIYVCGLANSLQKGVNKALNILNSDVAHQKLDDFVRESTDC</sequence>
<gene>
    <name evidence="1" type="primary">trpD</name>
    <name type="ordered locus">Rmag_0112</name>
</gene>